<feature type="chain" id="PRO_0000386150" description="GTPase Obg">
    <location>
        <begin position="1"/>
        <end position="406"/>
    </location>
</feature>
<feature type="domain" description="Obg" evidence="2">
    <location>
        <begin position="1"/>
        <end position="159"/>
    </location>
</feature>
<feature type="domain" description="OBG-type G" evidence="1">
    <location>
        <begin position="160"/>
        <end position="334"/>
    </location>
</feature>
<feature type="region of interest" description="Disordered" evidence="3">
    <location>
        <begin position="127"/>
        <end position="148"/>
    </location>
</feature>
<feature type="region of interest" description="Disordered" evidence="3">
    <location>
        <begin position="382"/>
        <end position="406"/>
    </location>
</feature>
<feature type="compositionally biased region" description="Polar residues" evidence="3">
    <location>
        <begin position="129"/>
        <end position="143"/>
    </location>
</feature>
<feature type="compositionally biased region" description="Acidic residues" evidence="3">
    <location>
        <begin position="385"/>
        <end position="399"/>
    </location>
</feature>
<feature type="binding site" evidence="1">
    <location>
        <begin position="166"/>
        <end position="173"/>
    </location>
    <ligand>
        <name>GTP</name>
        <dbReference type="ChEBI" id="CHEBI:37565"/>
    </ligand>
</feature>
<feature type="binding site" evidence="1">
    <location>
        <position position="173"/>
    </location>
    <ligand>
        <name>Mg(2+)</name>
        <dbReference type="ChEBI" id="CHEBI:18420"/>
    </ligand>
</feature>
<feature type="binding site" evidence="1">
    <location>
        <begin position="191"/>
        <end position="195"/>
    </location>
    <ligand>
        <name>GTP</name>
        <dbReference type="ChEBI" id="CHEBI:37565"/>
    </ligand>
</feature>
<feature type="binding site" evidence="1">
    <location>
        <position position="193"/>
    </location>
    <ligand>
        <name>Mg(2+)</name>
        <dbReference type="ChEBI" id="CHEBI:18420"/>
    </ligand>
</feature>
<feature type="binding site" evidence="1">
    <location>
        <begin position="213"/>
        <end position="216"/>
    </location>
    <ligand>
        <name>GTP</name>
        <dbReference type="ChEBI" id="CHEBI:37565"/>
    </ligand>
</feature>
<feature type="binding site" evidence="1">
    <location>
        <begin position="283"/>
        <end position="286"/>
    </location>
    <ligand>
        <name>GTP</name>
        <dbReference type="ChEBI" id="CHEBI:37565"/>
    </ligand>
</feature>
<feature type="binding site" evidence="1">
    <location>
        <begin position="315"/>
        <end position="317"/>
    </location>
    <ligand>
        <name>GTP</name>
        <dbReference type="ChEBI" id="CHEBI:37565"/>
    </ligand>
</feature>
<protein>
    <recommendedName>
        <fullName evidence="1">GTPase Obg</fullName>
        <ecNumber evidence="1">3.6.5.-</ecNumber>
    </recommendedName>
    <alternativeName>
        <fullName evidence="1">GTP-binding protein Obg</fullName>
    </alternativeName>
</protein>
<keyword id="KW-0963">Cytoplasm</keyword>
<keyword id="KW-0342">GTP-binding</keyword>
<keyword id="KW-0378">Hydrolase</keyword>
<keyword id="KW-0460">Magnesium</keyword>
<keyword id="KW-0479">Metal-binding</keyword>
<keyword id="KW-0547">Nucleotide-binding</keyword>
<keyword id="KW-1185">Reference proteome</keyword>
<comment type="function">
    <text evidence="1">An essential GTPase which binds GTP, GDP and possibly (p)ppGpp with moderate affinity, with high nucleotide exchange rates and a fairly low GTP hydrolysis rate. Plays a role in control of the cell cycle, stress response, ribosome biogenesis and in those bacteria that undergo differentiation, in morphogenesis control.</text>
</comment>
<comment type="cofactor">
    <cofactor evidence="1">
        <name>Mg(2+)</name>
        <dbReference type="ChEBI" id="CHEBI:18420"/>
    </cofactor>
</comment>
<comment type="subunit">
    <text evidence="1">Monomer.</text>
</comment>
<comment type="subcellular location">
    <subcellularLocation>
        <location evidence="1">Cytoplasm</location>
    </subcellularLocation>
</comment>
<comment type="similarity">
    <text evidence="1">Belongs to the TRAFAC class OBG-HflX-like GTPase superfamily. OBG GTPase family.</text>
</comment>
<gene>
    <name evidence="1" type="primary">obg</name>
    <name type="ordered locus">PA4566</name>
</gene>
<organism>
    <name type="scientific">Pseudomonas aeruginosa (strain ATCC 15692 / DSM 22644 / CIP 104116 / JCM 14847 / LMG 12228 / 1C / PRS 101 / PAO1)</name>
    <dbReference type="NCBI Taxonomy" id="208964"/>
    <lineage>
        <taxon>Bacteria</taxon>
        <taxon>Pseudomonadati</taxon>
        <taxon>Pseudomonadota</taxon>
        <taxon>Gammaproteobacteria</taxon>
        <taxon>Pseudomonadales</taxon>
        <taxon>Pseudomonadaceae</taxon>
        <taxon>Pseudomonas</taxon>
    </lineage>
</organism>
<proteinExistence type="inferred from homology"/>
<evidence type="ECO:0000255" key="1">
    <source>
        <dbReference type="HAMAP-Rule" id="MF_01454"/>
    </source>
</evidence>
<evidence type="ECO:0000255" key="2">
    <source>
        <dbReference type="PROSITE-ProRule" id="PRU01231"/>
    </source>
</evidence>
<evidence type="ECO:0000256" key="3">
    <source>
        <dbReference type="SAM" id="MobiDB-lite"/>
    </source>
</evidence>
<accession>Q9HVL8</accession>
<dbReference type="EC" id="3.6.5.-" evidence="1"/>
<dbReference type="EMBL" id="AE004091">
    <property type="protein sequence ID" value="AAG07954.1"/>
    <property type="molecule type" value="Genomic_DNA"/>
</dbReference>
<dbReference type="PIR" id="H83074">
    <property type="entry name" value="H83074"/>
</dbReference>
<dbReference type="RefSeq" id="NP_253256.1">
    <property type="nucleotide sequence ID" value="NC_002516.2"/>
</dbReference>
<dbReference type="SMR" id="Q9HVL8"/>
<dbReference type="FunCoup" id="Q9HVL8">
    <property type="interactions" value="695"/>
</dbReference>
<dbReference type="STRING" id="208964.PA4566"/>
<dbReference type="PaxDb" id="208964-PA4566"/>
<dbReference type="GeneID" id="880877"/>
<dbReference type="KEGG" id="pae:PA4566"/>
<dbReference type="PATRIC" id="fig|208964.12.peg.4778"/>
<dbReference type="PseudoCAP" id="PA4566"/>
<dbReference type="HOGENOM" id="CLU_011747_2_0_6"/>
<dbReference type="InParanoid" id="Q9HVL8"/>
<dbReference type="OrthoDB" id="9807318at2"/>
<dbReference type="PhylomeDB" id="Q9HVL8"/>
<dbReference type="BioCyc" id="PAER208964:G1FZ6-4659-MONOMER"/>
<dbReference type="Proteomes" id="UP000002438">
    <property type="component" value="Chromosome"/>
</dbReference>
<dbReference type="GO" id="GO:0005737">
    <property type="term" value="C:cytoplasm"/>
    <property type="evidence" value="ECO:0007669"/>
    <property type="project" value="UniProtKB-SubCell"/>
</dbReference>
<dbReference type="GO" id="GO:0005525">
    <property type="term" value="F:GTP binding"/>
    <property type="evidence" value="ECO:0000318"/>
    <property type="project" value="GO_Central"/>
</dbReference>
<dbReference type="GO" id="GO:0003924">
    <property type="term" value="F:GTPase activity"/>
    <property type="evidence" value="ECO:0000318"/>
    <property type="project" value="GO_Central"/>
</dbReference>
<dbReference type="GO" id="GO:0000287">
    <property type="term" value="F:magnesium ion binding"/>
    <property type="evidence" value="ECO:0007669"/>
    <property type="project" value="InterPro"/>
</dbReference>
<dbReference type="GO" id="GO:0042254">
    <property type="term" value="P:ribosome biogenesis"/>
    <property type="evidence" value="ECO:0007669"/>
    <property type="project" value="UniProtKB-UniRule"/>
</dbReference>
<dbReference type="CDD" id="cd01898">
    <property type="entry name" value="Obg"/>
    <property type="match status" value="1"/>
</dbReference>
<dbReference type="FunFam" id="2.70.210.12:FF:000001">
    <property type="entry name" value="GTPase Obg"/>
    <property type="match status" value="1"/>
</dbReference>
<dbReference type="FunFam" id="3.40.50.300:FF:000185">
    <property type="entry name" value="GTPase Obg"/>
    <property type="match status" value="1"/>
</dbReference>
<dbReference type="Gene3D" id="2.70.210.12">
    <property type="entry name" value="GTP1/OBG domain"/>
    <property type="match status" value="1"/>
</dbReference>
<dbReference type="Gene3D" id="3.40.50.300">
    <property type="entry name" value="P-loop containing nucleotide triphosphate hydrolases"/>
    <property type="match status" value="1"/>
</dbReference>
<dbReference type="HAMAP" id="MF_01454">
    <property type="entry name" value="GTPase_Obg"/>
    <property type="match status" value="1"/>
</dbReference>
<dbReference type="InterPro" id="IPR031167">
    <property type="entry name" value="G_OBG"/>
</dbReference>
<dbReference type="InterPro" id="IPR006073">
    <property type="entry name" value="GTP-bd"/>
</dbReference>
<dbReference type="InterPro" id="IPR014100">
    <property type="entry name" value="GTP-bd_Obg/CgtA"/>
</dbReference>
<dbReference type="InterPro" id="IPR006074">
    <property type="entry name" value="GTP1-OBG_CS"/>
</dbReference>
<dbReference type="InterPro" id="IPR006169">
    <property type="entry name" value="GTP1_OBG_dom"/>
</dbReference>
<dbReference type="InterPro" id="IPR036726">
    <property type="entry name" value="GTP1_OBG_dom_sf"/>
</dbReference>
<dbReference type="InterPro" id="IPR045086">
    <property type="entry name" value="OBG_GTPase"/>
</dbReference>
<dbReference type="InterPro" id="IPR027417">
    <property type="entry name" value="P-loop_NTPase"/>
</dbReference>
<dbReference type="NCBIfam" id="TIGR02729">
    <property type="entry name" value="Obg_CgtA"/>
    <property type="match status" value="1"/>
</dbReference>
<dbReference type="NCBIfam" id="NF008955">
    <property type="entry name" value="PRK12297.1"/>
    <property type="match status" value="1"/>
</dbReference>
<dbReference type="NCBIfam" id="NF008956">
    <property type="entry name" value="PRK12299.1"/>
    <property type="match status" value="1"/>
</dbReference>
<dbReference type="PANTHER" id="PTHR11702">
    <property type="entry name" value="DEVELOPMENTALLY REGULATED GTP-BINDING PROTEIN-RELATED"/>
    <property type="match status" value="1"/>
</dbReference>
<dbReference type="PANTHER" id="PTHR11702:SF31">
    <property type="entry name" value="MITOCHONDRIAL RIBOSOME-ASSOCIATED GTPASE 2"/>
    <property type="match status" value="1"/>
</dbReference>
<dbReference type="Pfam" id="PF01018">
    <property type="entry name" value="GTP1_OBG"/>
    <property type="match status" value="1"/>
</dbReference>
<dbReference type="Pfam" id="PF01926">
    <property type="entry name" value="MMR_HSR1"/>
    <property type="match status" value="1"/>
</dbReference>
<dbReference type="PIRSF" id="PIRSF002401">
    <property type="entry name" value="GTP_bd_Obg/CgtA"/>
    <property type="match status" value="1"/>
</dbReference>
<dbReference type="PRINTS" id="PR00326">
    <property type="entry name" value="GTP1OBG"/>
</dbReference>
<dbReference type="SUPFAM" id="SSF82051">
    <property type="entry name" value="Obg GTP-binding protein N-terminal domain"/>
    <property type="match status" value="1"/>
</dbReference>
<dbReference type="SUPFAM" id="SSF52540">
    <property type="entry name" value="P-loop containing nucleoside triphosphate hydrolases"/>
    <property type="match status" value="1"/>
</dbReference>
<dbReference type="PROSITE" id="PS51710">
    <property type="entry name" value="G_OBG"/>
    <property type="match status" value="1"/>
</dbReference>
<dbReference type="PROSITE" id="PS00905">
    <property type="entry name" value="GTP1_OBG"/>
    <property type="match status" value="1"/>
</dbReference>
<dbReference type="PROSITE" id="PS51883">
    <property type="entry name" value="OBG"/>
    <property type="match status" value="1"/>
</dbReference>
<sequence length="406" mass="44339">MKFVDEVSIHVKAGDGGNGLMSFRREKFIEKGGPNGGDGGDGGSIYLEADVNLNTLVDYRYTRRFDAQRGENGGSKDCTGAKGDDLILPVPVGTTVIDANTQEIIGDLTEPGQRLMVAQGGWHGLGNTRFKSSTNRAPRQTTPGKPGEARDLKLELKVLADVGLLGLPNAGKSTFIRAVSAAKPKVADYPFTTLVPNLGVVSVGRYKSFVVADIPGLIEGAAEGAGLGIRFLKHLARTRILLHLVDMAPLDESDPADAAEVIVRELGRFSPALTERERWLVLNKMDQILDPAEREARKQAVIERLGWEGPVYVISALERDGTEALSQDIMRYLDERTLRLEEDPQYAEELAELDRRIEDEARARLQALDDARALRRSGLKNAGAVDDDDFDDEEDDGDGPEIFYVP</sequence>
<reference key="1">
    <citation type="journal article" date="2000" name="Nature">
        <title>Complete genome sequence of Pseudomonas aeruginosa PAO1, an opportunistic pathogen.</title>
        <authorList>
            <person name="Stover C.K."/>
            <person name="Pham X.-Q.T."/>
            <person name="Erwin A.L."/>
            <person name="Mizoguchi S.D."/>
            <person name="Warrener P."/>
            <person name="Hickey M.J."/>
            <person name="Brinkman F.S.L."/>
            <person name="Hufnagle W.O."/>
            <person name="Kowalik D.J."/>
            <person name="Lagrou M."/>
            <person name="Garber R.L."/>
            <person name="Goltry L."/>
            <person name="Tolentino E."/>
            <person name="Westbrock-Wadman S."/>
            <person name="Yuan Y."/>
            <person name="Brody L.L."/>
            <person name="Coulter S.N."/>
            <person name="Folger K.R."/>
            <person name="Kas A."/>
            <person name="Larbig K."/>
            <person name="Lim R.M."/>
            <person name="Smith K.A."/>
            <person name="Spencer D.H."/>
            <person name="Wong G.K.-S."/>
            <person name="Wu Z."/>
            <person name="Paulsen I.T."/>
            <person name="Reizer J."/>
            <person name="Saier M.H. Jr."/>
            <person name="Hancock R.E.W."/>
            <person name="Lory S."/>
            <person name="Olson M.V."/>
        </authorList>
    </citation>
    <scope>NUCLEOTIDE SEQUENCE [LARGE SCALE GENOMIC DNA]</scope>
    <source>
        <strain>ATCC 15692 / DSM 22644 / CIP 104116 / JCM 14847 / LMG 12228 / 1C / PRS 101 / PAO1</strain>
    </source>
</reference>
<name>OBG_PSEAE</name>